<name>Y210_RICTY</name>
<organism>
    <name type="scientific">Rickettsia typhi (strain ATCC VR-144 / Wilmington)</name>
    <dbReference type="NCBI Taxonomy" id="257363"/>
    <lineage>
        <taxon>Bacteria</taxon>
        <taxon>Pseudomonadati</taxon>
        <taxon>Pseudomonadota</taxon>
        <taxon>Alphaproteobacteria</taxon>
        <taxon>Rickettsiales</taxon>
        <taxon>Rickettsiaceae</taxon>
        <taxon>Rickettsieae</taxon>
        <taxon>Rickettsia</taxon>
        <taxon>typhus group</taxon>
    </lineage>
</organism>
<comment type="cofactor">
    <cofactor evidence="1">
        <name>Zn(2+)</name>
        <dbReference type="ChEBI" id="CHEBI:29105"/>
    </cofactor>
    <text evidence="1">Divalent metal cations. Binds Zn(2+).</text>
</comment>
<comment type="similarity">
    <text evidence="3">Belongs to the peptidase M16 family.</text>
</comment>
<proteinExistence type="inferred from homology"/>
<protein>
    <recommendedName>
        <fullName>Uncharacterized zinc protease RT0210</fullName>
        <ecNumber>3.4.24.-</ecNumber>
    </recommendedName>
</protein>
<keyword id="KW-0378">Hydrolase</keyword>
<keyword id="KW-0479">Metal-binding</keyword>
<keyword id="KW-0482">Metalloprotease</keyword>
<keyword id="KW-0645">Protease</keyword>
<keyword id="KW-0862">Zinc</keyword>
<dbReference type="EC" id="3.4.24.-"/>
<dbReference type="EMBL" id="AE017197">
    <property type="protein sequence ID" value="AAU03692.1"/>
    <property type="molecule type" value="Genomic_DNA"/>
</dbReference>
<dbReference type="RefSeq" id="WP_011190678.1">
    <property type="nucleotide sequence ID" value="NC_006142.1"/>
</dbReference>
<dbReference type="SMR" id="Q68XF0"/>
<dbReference type="MEROPS" id="M16.016"/>
<dbReference type="KEGG" id="rty:RT0210"/>
<dbReference type="eggNOG" id="COG0612">
    <property type="taxonomic scope" value="Bacteria"/>
</dbReference>
<dbReference type="HOGENOM" id="CLU_009902_3_0_5"/>
<dbReference type="OrthoDB" id="9811314at2"/>
<dbReference type="Proteomes" id="UP000000604">
    <property type="component" value="Chromosome"/>
</dbReference>
<dbReference type="GO" id="GO:0046872">
    <property type="term" value="F:metal ion binding"/>
    <property type="evidence" value="ECO:0007669"/>
    <property type="project" value="UniProtKB-KW"/>
</dbReference>
<dbReference type="GO" id="GO:0004222">
    <property type="term" value="F:metalloendopeptidase activity"/>
    <property type="evidence" value="ECO:0007669"/>
    <property type="project" value="InterPro"/>
</dbReference>
<dbReference type="GO" id="GO:0006508">
    <property type="term" value="P:proteolysis"/>
    <property type="evidence" value="ECO:0007669"/>
    <property type="project" value="UniProtKB-KW"/>
</dbReference>
<dbReference type="FunFam" id="3.30.830.10:FF:000008">
    <property type="entry name" value="Mitochondrial-processing peptidase subunit beta"/>
    <property type="match status" value="1"/>
</dbReference>
<dbReference type="Gene3D" id="3.30.830.10">
    <property type="entry name" value="Metalloenzyme, LuxS/M16 peptidase-like"/>
    <property type="match status" value="2"/>
</dbReference>
<dbReference type="InterPro" id="IPR011249">
    <property type="entry name" value="Metalloenz_LuxS/M16"/>
</dbReference>
<dbReference type="InterPro" id="IPR050361">
    <property type="entry name" value="MPP/UQCRC_Complex"/>
</dbReference>
<dbReference type="InterPro" id="IPR011765">
    <property type="entry name" value="Pept_M16_N"/>
</dbReference>
<dbReference type="InterPro" id="IPR001431">
    <property type="entry name" value="Pept_M16_Zn_BS"/>
</dbReference>
<dbReference type="InterPro" id="IPR007863">
    <property type="entry name" value="Peptidase_M16_C"/>
</dbReference>
<dbReference type="PANTHER" id="PTHR11851">
    <property type="entry name" value="METALLOPROTEASE"/>
    <property type="match status" value="1"/>
</dbReference>
<dbReference type="PANTHER" id="PTHR11851:SF49">
    <property type="entry name" value="MITOCHONDRIAL-PROCESSING PEPTIDASE SUBUNIT ALPHA"/>
    <property type="match status" value="1"/>
</dbReference>
<dbReference type="Pfam" id="PF00675">
    <property type="entry name" value="Peptidase_M16"/>
    <property type="match status" value="1"/>
</dbReference>
<dbReference type="Pfam" id="PF05193">
    <property type="entry name" value="Peptidase_M16_C"/>
    <property type="match status" value="1"/>
</dbReference>
<dbReference type="SUPFAM" id="SSF63411">
    <property type="entry name" value="LuxS/MPP-like metallohydrolase"/>
    <property type="match status" value="2"/>
</dbReference>
<dbReference type="PROSITE" id="PS00143">
    <property type="entry name" value="INSULINASE"/>
    <property type="match status" value="1"/>
</dbReference>
<gene>
    <name type="ordered locus">RT0210</name>
</gene>
<reference key="1">
    <citation type="journal article" date="2004" name="J. Bacteriol.">
        <title>Complete genome sequence of Rickettsia typhi and comparison with sequences of other Rickettsiae.</title>
        <authorList>
            <person name="McLeod M.P."/>
            <person name="Qin X."/>
            <person name="Karpathy S.E."/>
            <person name="Gioia J."/>
            <person name="Highlander S.K."/>
            <person name="Fox G.E."/>
            <person name="McNeill T.Z."/>
            <person name="Jiang H."/>
            <person name="Muzny D."/>
            <person name="Jacob L.S."/>
            <person name="Hawes A.C."/>
            <person name="Sodergren E."/>
            <person name="Gill R."/>
            <person name="Hume J."/>
            <person name="Morgan M."/>
            <person name="Fan G."/>
            <person name="Amin A.G."/>
            <person name="Gibbs R.A."/>
            <person name="Hong C."/>
            <person name="Yu X.-J."/>
            <person name="Walker D.H."/>
            <person name="Weinstock G.M."/>
        </authorList>
    </citation>
    <scope>NUCLEOTIDE SEQUENCE [LARGE SCALE GENOMIC DNA]</scope>
    <source>
        <strain>ATCC VR-144 / Wilmington</strain>
    </source>
</reference>
<feature type="chain" id="PRO_0000295171" description="Uncharacterized zinc protease RT0210">
    <location>
        <begin position="1"/>
        <end position="412"/>
    </location>
</feature>
<feature type="active site" description="Proton acceptor" evidence="2">
    <location>
        <position position="52"/>
    </location>
</feature>
<feature type="binding site" evidence="2">
    <location>
        <position position="49"/>
    </location>
    <ligand>
        <name>Zn(2+)</name>
        <dbReference type="ChEBI" id="CHEBI:29105"/>
    </ligand>
</feature>
<feature type="binding site" evidence="2">
    <location>
        <position position="53"/>
    </location>
    <ligand>
        <name>Zn(2+)</name>
        <dbReference type="ChEBI" id="CHEBI:29105"/>
    </ligand>
</feature>
<feature type="binding site" evidence="2">
    <location>
        <position position="129"/>
    </location>
    <ligand>
        <name>Zn(2+)</name>
        <dbReference type="ChEBI" id="CHEBI:29105"/>
    </ligand>
</feature>
<sequence>MKENFNISKLKNGLTILTYNMPYVHSVAINLIAKVGARYENEEEEGISHFLEHMAFKGTKTRTAQQIAEEFDSIGGYFNAYTGYENTVYYVRVLSENCHKALNILADIIQNSIFADEEISKEYQIIMQEIAHHHDNPDDLIYETFYNTVYKDQPLGKSILGTAKTLVKFTQEHFLNFIGKHYNAENLYLSIAGNIEHNKIVIIAEELFASLKQGVTSSFIPAKYIGGKGFIHKELEQTSLVLGFECTSYINLEKLYQTYLLSIIFGGGVSSRLFQSIREKLGLAYVVGSYNSAYFDSGVFTIYASTAHEKLELLYSEIKNEIIKITETVSTEELMRAKIQLRSNLQMAQEQNSYKSEEIGKNYSVFGKYILPEEIIEIITNIKADDIINTANKIFSGTTALAIIGPNDLNGF</sequence>
<accession>Q68XF0</accession>
<evidence type="ECO:0000250" key="1"/>
<evidence type="ECO:0000255" key="2">
    <source>
        <dbReference type="PROSITE-ProRule" id="PRU10096"/>
    </source>
</evidence>
<evidence type="ECO:0000305" key="3"/>